<sequence>MEDFVRQCFNPMIVELAEKAMKEYGEDLKIETNKFAAICTHLEVCFMYSDFHFINEQGESIVVELDDPNALLKHRFEIIEGRDRTMAWTVVNSICNTTGAEKPKFLPDLYDYKENRFIEIGVTRREVHIYYLEKANKIKSENTHIHIFSFTGEEMATKADYTLDEESRARIKTRLFTIRQEMANRGLWDSFRQSERGEETIEERFEITGTMRRLADQSLPPNFSCLENFRAYVDGFEPNGCIEGKLSQMSKEVNARIEPFLKTTPRPIKLPDGPPCFQRSKFLLMDALKLSIEDPSHEGEGIPLYDAIKCMRTFFGWKEPYIVKPHEKGINPNYLLSWKQVLAELQDIENEEKIPRTKNMKKTSQLKWALGENMAPEKVDFDNCRDISDLKQYDSDEPELRSLSSWIQNEFNKACELTDSIWIELDEIGEDVAPIEYIASMRRNYFTAEVSHCRATEYIMKGVYINTALLNASCAAMDDFQLIPMISKCRTKEGRRKTNLYGFIIKGRSHLRNDTDVVNFVSMEFSLTDPRLEPHKWEKYCVLEIGDMLLRSAIGQMSRPMFLYVRTNGTSKIKMKWGMEMRRCLLQSLQQIESMIEAESSVKEKDMTKEFFENKSETWPIGESPKGVEEGSIGKVCRTLLAKSVFNSLYASPQLEGFSAESRKLLLVVQALRDNLEPGTFDLGGLYEAIEECLINDPWVLLNASWFNSFLTHALR</sequence>
<keyword id="KW-1157">Cap snatching</keyword>
<keyword id="KW-0255">Endonuclease</keyword>
<keyword id="KW-1262">Eukaryotic host gene expression shutoff by virus</keyword>
<keyword id="KW-1191">Eukaryotic host transcription shutoff by virus</keyword>
<keyword id="KW-1035">Host cytoplasm</keyword>
<keyword id="KW-1190">Host gene expression shutoff by virus</keyword>
<keyword id="KW-1048">Host nucleus</keyword>
<keyword id="KW-0945">Host-virus interaction</keyword>
<keyword id="KW-0378">Hydrolase</keyword>
<keyword id="KW-1104">Inhibition of host RNA polymerase II by virus</keyword>
<keyword id="KW-0464">Manganese</keyword>
<keyword id="KW-0479">Metal-binding</keyword>
<keyword id="KW-0540">Nuclease</keyword>
<keyword id="KW-0597">Phosphoprotein</keyword>
<keyword id="KW-0688">Ribosomal frameshifting</keyword>
<organism>
    <name type="scientific">Influenza A virus (strain A/Memphis/101/1972 H3N2)</name>
    <dbReference type="NCBI Taxonomy" id="383583"/>
    <lineage>
        <taxon>Viruses</taxon>
        <taxon>Riboviria</taxon>
        <taxon>Orthornavirae</taxon>
        <taxon>Negarnaviricota</taxon>
        <taxon>Polyploviricotina</taxon>
        <taxon>Insthoviricetes</taxon>
        <taxon>Articulavirales</taxon>
        <taxon>Orthomyxoviridae</taxon>
        <taxon>Alphainfluenzavirus</taxon>
        <taxon>Alphainfluenzavirus influenzae</taxon>
        <taxon>Influenza A virus</taxon>
    </lineage>
</organism>
<name>PA_I72A4</name>
<proteinExistence type="inferred from homology"/>
<accession>Q2ICQ3</accession>
<comment type="function">
    <text evidence="2">Plays an essential role in viral RNA transcription and replication by forming the heterotrimeric polymerase complex together with PB1 and PB2 subunits. The complex transcribes viral mRNAs by using a unique mechanism called cap-snatching. It consists in the hijacking and cleavage of host capped pre-mRNAs. These short capped RNAs are then used as primers for viral mRNAs. The PB2 subunit is responsible for the binding of the 5' cap of cellular pre-mRNAs which are subsequently cleaved after 10-13 nucleotides by the PA subunit that carries the endonuclease activity.</text>
</comment>
<comment type="cofactor">
    <cofactor evidence="2">
        <name>Mn(2+)</name>
        <dbReference type="ChEBI" id="CHEBI:29035"/>
    </cofactor>
    <text evidence="2">Binds 2 manganese ions per subunit.</text>
</comment>
<comment type="subunit">
    <text evidence="1 2">Influenza RNA polymerase is composed of three subunits: PB1, PB2 and PA. Interacts (via C-terminus) with PB1 (via N-terminus).</text>
</comment>
<comment type="subcellular location">
    <subcellularLocation>
        <location evidence="2">Host cytoplasm</location>
    </subcellularLocation>
    <subcellularLocation>
        <location evidence="2">Host nucleus</location>
    </subcellularLocation>
    <text evidence="1 2">PB1 and PA are transported in the host nucleus as a complex.</text>
</comment>
<comment type="alternative products">
    <event type="ribosomal frameshifting"/>
    <isoform>
        <id>Q2ICQ3-1</id>
        <name>PA</name>
        <sequence type="displayed"/>
    </isoform>
    <isoform>
        <id>P0DJT0-1</id>
        <name>PA-X</name>
        <sequence type="external"/>
    </isoform>
</comment>
<comment type="PTM">
    <text evidence="1 2">Phosphorylated on serines and threonines by host kinases, including human casein kinase II.</text>
</comment>
<comment type="similarity">
    <text evidence="2">Belongs to the influenza viruses PA family.</text>
</comment>
<feature type="chain" id="PRO_0000279257" description="Polymerase acidic protein">
    <location>
        <begin position="1"/>
        <end position="716"/>
    </location>
</feature>
<feature type="short sequence motif" description="Nuclear localization signal 1 (NLS1)" evidence="1 2">
    <location>
        <begin position="124"/>
        <end position="139"/>
    </location>
</feature>
<feature type="short sequence motif" description="Nuclear localization signal 2 (NLS2)" evidence="1 2">
    <location>
        <begin position="184"/>
        <end position="247"/>
    </location>
</feature>
<feature type="binding site" evidence="2">
    <location>
        <position position="41"/>
    </location>
    <ligand>
        <name>Mn(2+)</name>
        <dbReference type="ChEBI" id="CHEBI:29035"/>
        <label>1</label>
    </ligand>
</feature>
<feature type="binding site" evidence="2">
    <location>
        <position position="80"/>
    </location>
    <ligand>
        <name>Mn(2+)</name>
        <dbReference type="ChEBI" id="CHEBI:29035"/>
        <label>2</label>
    </ligand>
</feature>
<feature type="binding site" evidence="2">
    <location>
        <position position="108"/>
    </location>
    <ligand>
        <name>Mn(2+)</name>
        <dbReference type="ChEBI" id="CHEBI:29035"/>
        <label>1</label>
    </ligand>
</feature>
<feature type="binding site" evidence="2">
    <location>
        <position position="108"/>
    </location>
    <ligand>
        <name>Mn(2+)</name>
        <dbReference type="ChEBI" id="CHEBI:29035"/>
        <label>2</label>
    </ligand>
</feature>
<feature type="binding site" evidence="2">
    <location>
        <position position="119"/>
    </location>
    <ligand>
        <name>Mn(2+)</name>
        <dbReference type="ChEBI" id="CHEBI:29035"/>
        <label>1</label>
    </ligand>
</feature>
<feature type="binding site" evidence="2">
    <location>
        <position position="120"/>
    </location>
    <ligand>
        <name>Mn(2+)</name>
        <dbReference type="ChEBI" id="CHEBI:29035"/>
        <label>1</label>
    </ligand>
</feature>
<organismHost>
    <name type="scientific">Aves</name>
    <dbReference type="NCBI Taxonomy" id="8782"/>
</organismHost>
<organismHost>
    <name type="scientific">Cetacea</name>
    <name type="common">whales</name>
    <dbReference type="NCBI Taxonomy" id="9721"/>
</organismHost>
<organismHost>
    <name type="scientific">Homo sapiens</name>
    <name type="common">Human</name>
    <dbReference type="NCBI Taxonomy" id="9606"/>
</organismHost>
<organismHost>
    <name type="scientific">Phocidae</name>
    <name type="common">true seals</name>
    <dbReference type="NCBI Taxonomy" id="9709"/>
</organismHost>
<organismHost>
    <name type="scientific">Sus scrofa</name>
    <name type="common">Pig</name>
    <dbReference type="NCBI Taxonomy" id="9823"/>
</organismHost>
<evidence type="ECO:0000250" key="1">
    <source>
        <dbReference type="UniProtKB" id="P03433"/>
    </source>
</evidence>
<evidence type="ECO:0000255" key="2">
    <source>
        <dbReference type="HAMAP-Rule" id="MF_04063"/>
    </source>
</evidence>
<gene>
    <name evidence="2" type="primary">PA</name>
</gene>
<reference key="1">
    <citation type="submission" date="2006-02" db="EMBL/GenBank/DDBJ databases">
        <title>The NIAID influenza genome sequencing project.</title>
        <authorList>
            <person name="Ghedin E."/>
            <person name="Spiro D."/>
            <person name="Miller N."/>
            <person name="Zaborsky J."/>
            <person name="Feldblyum T."/>
            <person name="Subbu V."/>
            <person name="Shumway M."/>
            <person name="Sparenborg J."/>
            <person name="Groveman L."/>
            <person name="Halpin R."/>
            <person name="Sitz J."/>
            <person name="Koo H."/>
            <person name="Salzberg S.L."/>
            <person name="Webster R.G."/>
            <person name="Hoffmann E."/>
            <person name="Krauss S."/>
            <person name="Naeve C."/>
            <person name="Bao Y."/>
            <person name="Bolotov P."/>
            <person name="Dernovoy D."/>
            <person name="Kiryutin B."/>
            <person name="Lipman D.J."/>
            <person name="Tatusova T."/>
        </authorList>
    </citation>
    <scope>NUCLEOTIDE SEQUENCE [GENOMIC RNA]</scope>
</reference>
<dbReference type="EC" id="3.1.-.-" evidence="2"/>
<dbReference type="EMBL" id="CY008681">
    <property type="protein sequence ID" value="ABD17330.1"/>
    <property type="molecule type" value="Genomic_RNA"/>
</dbReference>
<dbReference type="SMR" id="Q2ICQ3"/>
<dbReference type="MEROPS" id="S62.001"/>
<dbReference type="Proteomes" id="UP000009189">
    <property type="component" value="Genome"/>
</dbReference>
<dbReference type="GO" id="GO:0030430">
    <property type="term" value="C:host cell cytoplasm"/>
    <property type="evidence" value="ECO:0007669"/>
    <property type="project" value="UniProtKB-SubCell"/>
</dbReference>
<dbReference type="GO" id="GO:0042025">
    <property type="term" value="C:host cell nucleus"/>
    <property type="evidence" value="ECO:0007669"/>
    <property type="project" value="UniProtKB-SubCell"/>
</dbReference>
<dbReference type="GO" id="GO:0004519">
    <property type="term" value="F:endonuclease activity"/>
    <property type="evidence" value="ECO:0007669"/>
    <property type="project" value="UniProtKB-KW"/>
</dbReference>
<dbReference type="GO" id="GO:0046872">
    <property type="term" value="F:metal ion binding"/>
    <property type="evidence" value="ECO:0007669"/>
    <property type="project" value="UniProtKB-KW"/>
</dbReference>
<dbReference type="GO" id="GO:0003723">
    <property type="term" value="F:RNA binding"/>
    <property type="evidence" value="ECO:0007669"/>
    <property type="project" value="UniProtKB-UniRule"/>
</dbReference>
<dbReference type="GO" id="GO:0075526">
    <property type="term" value="P:cap snatching"/>
    <property type="evidence" value="ECO:0007669"/>
    <property type="project" value="UniProtKB-UniRule"/>
</dbReference>
<dbReference type="GO" id="GO:0006351">
    <property type="term" value="P:DNA-templated transcription"/>
    <property type="evidence" value="ECO:0007669"/>
    <property type="project" value="UniProtKB-UniRule"/>
</dbReference>
<dbReference type="GO" id="GO:0039657">
    <property type="term" value="P:symbiont-mediated suppression of host gene expression"/>
    <property type="evidence" value="ECO:0007669"/>
    <property type="project" value="UniProtKB-KW"/>
</dbReference>
<dbReference type="GO" id="GO:0039523">
    <property type="term" value="P:symbiont-mediated suppression of host mRNA transcription via inhibition of RNA polymerase II activity"/>
    <property type="evidence" value="ECO:0007669"/>
    <property type="project" value="UniProtKB-UniRule"/>
</dbReference>
<dbReference type="GO" id="GO:0039694">
    <property type="term" value="P:viral RNA genome replication"/>
    <property type="evidence" value="ECO:0007669"/>
    <property type="project" value="InterPro"/>
</dbReference>
<dbReference type="GO" id="GO:0075523">
    <property type="term" value="P:viral translational frameshifting"/>
    <property type="evidence" value="ECO:0007669"/>
    <property type="project" value="UniProtKB-KW"/>
</dbReference>
<dbReference type="FunFam" id="3.40.91.90:FF:000001">
    <property type="entry name" value="Polymerase acidic protein"/>
    <property type="match status" value="1"/>
</dbReference>
<dbReference type="Gene3D" id="3.40.91.90">
    <property type="entry name" value="Influenza RNA-dependent RNA polymerase subunit PA, endonuclease domain"/>
    <property type="match status" value="1"/>
</dbReference>
<dbReference type="HAMAP" id="MF_04063">
    <property type="entry name" value="INFV_PA"/>
    <property type="match status" value="1"/>
</dbReference>
<dbReference type="InterPro" id="IPR037534">
    <property type="entry name" value="INFV_PA"/>
</dbReference>
<dbReference type="InterPro" id="IPR001009">
    <property type="entry name" value="PA/PA-X"/>
</dbReference>
<dbReference type="InterPro" id="IPR038372">
    <property type="entry name" value="PA/PA-X_sf"/>
</dbReference>
<dbReference type="Pfam" id="PF00603">
    <property type="entry name" value="Flu_PA"/>
    <property type="match status" value="1"/>
</dbReference>
<protein>
    <recommendedName>
        <fullName evidence="2">Polymerase acidic protein</fullName>
        <ecNumber evidence="2">3.1.-.-</ecNumber>
    </recommendedName>
    <alternativeName>
        <fullName evidence="2">RNA-directed RNA polymerase subunit P2</fullName>
    </alternativeName>
</protein>